<evidence type="ECO:0000250" key="1">
    <source>
        <dbReference type="UniProtKB" id="D3YWJ0"/>
    </source>
</evidence>
<evidence type="ECO:0000255" key="2"/>
<evidence type="ECO:0000256" key="3">
    <source>
        <dbReference type="SAM" id="MobiDB-lite"/>
    </source>
</evidence>
<evidence type="ECO:0000269" key="4">
    <source>
    </source>
</evidence>
<evidence type="ECO:0000269" key="5">
    <source>
    </source>
</evidence>
<evidence type="ECO:0000305" key="6"/>
<dbReference type="EC" id="3.6.1.-"/>
<dbReference type="EMBL" id="AC091573">
    <property type="status" value="NOT_ANNOTATED_CDS"/>
    <property type="molecule type" value="Genomic_DNA"/>
</dbReference>
<dbReference type="EMBL" id="AB075870">
    <property type="protein sequence ID" value="BAD38652.1"/>
    <property type="status" value="ALT_SEQ"/>
    <property type="molecule type" value="mRNA"/>
</dbReference>
<dbReference type="EMBL" id="AK129923">
    <property type="protein sequence ID" value="BAC85251.1"/>
    <property type="status" value="ALT_INIT"/>
    <property type="molecule type" value="mRNA"/>
</dbReference>
<dbReference type="CCDS" id="CCDS47833.1"/>
<dbReference type="RefSeq" id="NP_001010906.1">
    <property type="nucleotide sequence ID" value="NM_001010906.2"/>
</dbReference>
<dbReference type="BioGRID" id="133203">
    <property type="interactions" value="6"/>
</dbReference>
<dbReference type="FunCoup" id="Q68CJ6">
    <property type="interactions" value="2"/>
</dbReference>
<dbReference type="IntAct" id="Q68CJ6">
    <property type="interactions" value="2"/>
</dbReference>
<dbReference type="STRING" id="9606.ENSP00000408697"/>
<dbReference type="iPTMnet" id="Q68CJ6"/>
<dbReference type="PhosphoSitePlus" id="Q68CJ6"/>
<dbReference type="BioMuta" id="NUGGC"/>
<dbReference type="DMDM" id="292495064"/>
<dbReference type="jPOST" id="Q68CJ6"/>
<dbReference type="MassIVE" id="Q68CJ6"/>
<dbReference type="PaxDb" id="9606-ENSP00000408697"/>
<dbReference type="PeptideAtlas" id="Q68CJ6"/>
<dbReference type="ProteomicsDB" id="66002"/>
<dbReference type="Antibodypedia" id="5386">
    <property type="antibodies" value="29 antibodies from 13 providers"/>
</dbReference>
<dbReference type="DNASU" id="389643"/>
<dbReference type="Ensembl" id="ENST00000413272.7">
    <property type="protein sequence ID" value="ENSP00000408697.2"/>
    <property type="gene ID" value="ENSG00000189233.12"/>
</dbReference>
<dbReference type="GeneID" id="389643"/>
<dbReference type="KEGG" id="hsa:389643"/>
<dbReference type="MANE-Select" id="ENST00000413272.7">
    <property type="protein sequence ID" value="ENSP00000408697.2"/>
    <property type="RefSeq nucleotide sequence ID" value="NM_001010906.2"/>
    <property type="RefSeq protein sequence ID" value="NP_001010906.1"/>
</dbReference>
<dbReference type="UCSC" id="uc003xgm.4">
    <property type="organism name" value="human"/>
</dbReference>
<dbReference type="AGR" id="HGNC:33550"/>
<dbReference type="CTD" id="389643"/>
<dbReference type="DisGeNET" id="389643"/>
<dbReference type="GeneCards" id="NUGGC"/>
<dbReference type="HGNC" id="HGNC:33550">
    <property type="gene designation" value="NUGGC"/>
</dbReference>
<dbReference type="HPA" id="ENSG00000189233">
    <property type="expression patterns" value="Group enriched (liver, lymphoid tissue)"/>
</dbReference>
<dbReference type="MIM" id="619088">
    <property type="type" value="gene"/>
</dbReference>
<dbReference type="neXtProt" id="NX_Q68CJ6"/>
<dbReference type="OpenTargets" id="ENSG00000189233"/>
<dbReference type="PharmGKB" id="PA162380784"/>
<dbReference type="VEuPathDB" id="HostDB:ENSG00000189233"/>
<dbReference type="eggNOG" id="ENOG502QVUX">
    <property type="taxonomic scope" value="Eukaryota"/>
</dbReference>
<dbReference type="GeneTree" id="ENSGT00390000007091"/>
<dbReference type="HOGENOM" id="CLU_019456_0_0_1"/>
<dbReference type="InParanoid" id="Q68CJ6"/>
<dbReference type="OMA" id="IEQCFAH"/>
<dbReference type="OrthoDB" id="3598281at2759"/>
<dbReference type="PAN-GO" id="Q68CJ6">
    <property type="GO annotations" value="1 GO annotation based on evolutionary models"/>
</dbReference>
<dbReference type="PhylomeDB" id="Q68CJ6"/>
<dbReference type="TreeFam" id="TF352086"/>
<dbReference type="PathwayCommons" id="Q68CJ6"/>
<dbReference type="BioGRID-ORCS" id="389643">
    <property type="hits" value="14 hits in 1152 CRISPR screens"/>
</dbReference>
<dbReference type="ChiTaRS" id="NUGGC">
    <property type="organism name" value="human"/>
</dbReference>
<dbReference type="GenomeRNAi" id="389643"/>
<dbReference type="Pharos" id="Q68CJ6">
    <property type="development level" value="Tbio"/>
</dbReference>
<dbReference type="PRO" id="PR:Q68CJ6"/>
<dbReference type="Proteomes" id="UP000005640">
    <property type="component" value="Chromosome 8"/>
</dbReference>
<dbReference type="RNAct" id="Q68CJ6">
    <property type="molecule type" value="protein"/>
</dbReference>
<dbReference type="Bgee" id="ENSG00000189233">
    <property type="expression patterns" value="Expressed in liver and 71 other cell types or tissues"/>
</dbReference>
<dbReference type="ExpressionAtlas" id="Q68CJ6">
    <property type="expression patterns" value="baseline and differential"/>
</dbReference>
<dbReference type="GO" id="GO:0005829">
    <property type="term" value="C:cytosol"/>
    <property type="evidence" value="ECO:0000314"/>
    <property type="project" value="HPA"/>
</dbReference>
<dbReference type="GO" id="GO:0016607">
    <property type="term" value="C:nuclear speck"/>
    <property type="evidence" value="ECO:0000314"/>
    <property type="project" value="HPA"/>
</dbReference>
<dbReference type="GO" id="GO:0005654">
    <property type="term" value="C:nucleoplasm"/>
    <property type="evidence" value="ECO:0000314"/>
    <property type="project" value="HPA"/>
</dbReference>
<dbReference type="GO" id="GO:0005525">
    <property type="term" value="F:GTP binding"/>
    <property type="evidence" value="ECO:0007669"/>
    <property type="project" value="UniProtKB-KW"/>
</dbReference>
<dbReference type="GO" id="GO:0003924">
    <property type="term" value="F:GTPase activity"/>
    <property type="evidence" value="ECO:0000314"/>
    <property type="project" value="UniProtKB"/>
</dbReference>
<dbReference type="GO" id="GO:0071222">
    <property type="term" value="P:cellular response to lipopolysaccharide"/>
    <property type="evidence" value="ECO:0000314"/>
    <property type="project" value="UniProtKB"/>
</dbReference>
<dbReference type="GO" id="GO:0043066">
    <property type="term" value="P:negative regulation of apoptotic process"/>
    <property type="evidence" value="ECO:0000315"/>
    <property type="project" value="UniProtKB"/>
</dbReference>
<dbReference type="GO" id="GO:0033262">
    <property type="term" value="P:regulation of nuclear cell cycle DNA replication"/>
    <property type="evidence" value="ECO:0000315"/>
    <property type="project" value="UniProtKB"/>
</dbReference>
<dbReference type="CDD" id="cd00882">
    <property type="entry name" value="Ras_like_GTPase"/>
    <property type="match status" value="1"/>
</dbReference>
<dbReference type="FunFam" id="3.40.50.300:FF:001353">
    <property type="entry name" value="Nuclear GTPase, germinal center associated"/>
    <property type="match status" value="1"/>
</dbReference>
<dbReference type="FunFam" id="3.40.50.300:FF:001102">
    <property type="entry name" value="Nuclear GTPase, germinal center-associated"/>
    <property type="match status" value="1"/>
</dbReference>
<dbReference type="Gene3D" id="3.40.50.300">
    <property type="entry name" value="P-loop containing nucleotide triphosphate hydrolases"/>
    <property type="match status" value="2"/>
</dbReference>
<dbReference type="InterPro" id="IPR045063">
    <property type="entry name" value="Dynamin_N"/>
</dbReference>
<dbReference type="InterPro" id="IPR053082">
    <property type="entry name" value="Nuclear_GTPase_SLIP-GC"/>
</dbReference>
<dbReference type="InterPro" id="IPR027417">
    <property type="entry name" value="P-loop_NTPase"/>
</dbReference>
<dbReference type="PANTHER" id="PTHR47308">
    <property type="entry name" value="NUCLEAR GTPASE SLIP-GC"/>
    <property type="match status" value="1"/>
</dbReference>
<dbReference type="PANTHER" id="PTHR47308:SF1">
    <property type="entry name" value="NUCLEAR GTPASE SLIP-GC"/>
    <property type="match status" value="1"/>
</dbReference>
<dbReference type="Pfam" id="PF00350">
    <property type="entry name" value="Dynamin_N"/>
    <property type="match status" value="1"/>
</dbReference>
<dbReference type="SUPFAM" id="SSF52540">
    <property type="entry name" value="P-loop containing nucleoside triphosphate hydrolases"/>
    <property type="match status" value="1"/>
</dbReference>
<reference key="1">
    <citation type="journal article" date="2006" name="Nature">
        <title>DNA sequence and analysis of human chromosome 8.</title>
        <authorList>
            <person name="Nusbaum C."/>
            <person name="Mikkelsen T.S."/>
            <person name="Zody M.C."/>
            <person name="Asakawa S."/>
            <person name="Taudien S."/>
            <person name="Garber M."/>
            <person name="Kodira C.D."/>
            <person name="Schueler M.G."/>
            <person name="Shimizu A."/>
            <person name="Whittaker C.A."/>
            <person name="Chang J.L."/>
            <person name="Cuomo C.A."/>
            <person name="Dewar K."/>
            <person name="FitzGerald M.G."/>
            <person name="Yang X."/>
            <person name="Allen N.R."/>
            <person name="Anderson S."/>
            <person name="Asakawa T."/>
            <person name="Blechschmidt K."/>
            <person name="Bloom T."/>
            <person name="Borowsky M.L."/>
            <person name="Butler J."/>
            <person name="Cook A."/>
            <person name="Corum B."/>
            <person name="DeArellano K."/>
            <person name="DeCaprio D."/>
            <person name="Dooley K.T."/>
            <person name="Dorris L. III"/>
            <person name="Engels R."/>
            <person name="Gloeckner G."/>
            <person name="Hafez N."/>
            <person name="Hagopian D.S."/>
            <person name="Hall J.L."/>
            <person name="Ishikawa S.K."/>
            <person name="Jaffe D.B."/>
            <person name="Kamat A."/>
            <person name="Kudoh J."/>
            <person name="Lehmann R."/>
            <person name="Lokitsang T."/>
            <person name="Macdonald P."/>
            <person name="Major J.E."/>
            <person name="Matthews C.D."/>
            <person name="Mauceli E."/>
            <person name="Menzel U."/>
            <person name="Mihalev A.H."/>
            <person name="Minoshima S."/>
            <person name="Murayama Y."/>
            <person name="Naylor J.W."/>
            <person name="Nicol R."/>
            <person name="Nguyen C."/>
            <person name="O'Leary S.B."/>
            <person name="O'Neill K."/>
            <person name="Parker S.C.J."/>
            <person name="Polley A."/>
            <person name="Raymond C.K."/>
            <person name="Reichwald K."/>
            <person name="Rodriguez J."/>
            <person name="Sasaki T."/>
            <person name="Schilhabel M."/>
            <person name="Siddiqui R."/>
            <person name="Smith C.L."/>
            <person name="Sneddon T.P."/>
            <person name="Talamas J.A."/>
            <person name="Tenzin P."/>
            <person name="Topham K."/>
            <person name="Venkataraman V."/>
            <person name="Wen G."/>
            <person name="Yamazaki S."/>
            <person name="Young S.K."/>
            <person name="Zeng Q."/>
            <person name="Zimmer A.R."/>
            <person name="Rosenthal A."/>
            <person name="Birren B.W."/>
            <person name="Platzer M."/>
            <person name="Shimizu N."/>
            <person name="Lander E.S."/>
        </authorList>
    </citation>
    <scope>NUCLEOTIDE SEQUENCE [LARGE SCALE GENOMIC DNA]</scope>
</reference>
<reference key="2">
    <citation type="journal article" date="2004" name="Oncogene">
        <title>Expression profiling and differential screening between hepatoblastomas and the corresponding normal livers: identification of high expression of the PLK1 oncogene as a poor-prognostic indicator of hepatoblastomas.</title>
        <authorList>
            <person name="Yamada S."/>
            <person name="Ohira M."/>
            <person name="Horie H."/>
            <person name="Ando K."/>
            <person name="Takayasu H."/>
            <person name="Suzuki Y."/>
            <person name="Sugano S."/>
            <person name="Hirata T."/>
            <person name="Goto T."/>
            <person name="Matsunaga T."/>
            <person name="Hiyama E."/>
            <person name="Hayashi Y."/>
            <person name="Ando H."/>
            <person name="Suita S."/>
            <person name="Kaneko M."/>
            <person name="Sasaki F."/>
            <person name="Hashizume K."/>
            <person name="Ohnuma N."/>
            <person name="Nakagawara A."/>
        </authorList>
    </citation>
    <scope>NUCLEOTIDE SEQUENCE [LARGE SCALE MRNA]</scope>
    <scope>VARIANTS PRO-23; ARG-328 AND ASN-474</scope>
    <source>
        <tissue>Hepatoblastoma</tissue>
    </source>
</reference>
<reference key="3">
    <citation type="journal article" date="2004" name="Nat. Genet.">
        <title>Complete sequencing and characterization of 21,243 full-length human cDNAs.</title>
        <authorList>
            <person name="Ota T."/>
            <person name="Suzuki Y."/>
            <person name="Nishikawa T."/>
            <person name="Otsuki T."/>
            <person name="Sugiyama T."/>
            <person name="Irie R."/>
            <person name="Wakamatsu A."/>
            <person name="Hayashi K."/>
            <person name="Sato H."/>
            <person name="Nagai K."/>
            <person name="Kimura K."/>
            <person name="Makita H."/>
            <person name="Sekine M."/>
            <person name="Obayashi M."/>
            <person name="Nishi T."/>
            <person name="Shibahara T."/>
            <person name="Tanaka T."/>
            <person name="Ishii S."/>
            <person name="Yamamoto J."/>
            <person name="Saito K."/>
            <person name="Kawai Y."/>
            <person name="Isono Y."/>
            <person name="Nakamura Y."/>
            <person name="Nagahari K."/>
            <person name="Murakami K."/>
            <person name="Yasuda T."/>
            <person name="Iwayanagi T."/>
            <person name="Wagatsuma M."/>
            <person name="Shiratori A."/>
            <person name="Sudo H."/>
            <person name="Hosoiri T."/>
            <person name="Kaku Y."/>
            <person name="Kodaira H."/>
            <person name="Kondo H."/>
            <person name="Sugawara M."/>
            <person name="Takahashi M."/>
            <person name="Kanda K."/>
            <person name="Yokoi T."/>
            <person name="Furuya T."/>
            <person name="Kikkawa E."/>
            <person name="Omura Y."/>
            <person name="Abe K."/>
            <person name="Kamihara K."/>
            <person name="Katsuta N."/>
            <person name="Sato K."/>
            <person name="Tanikawa M."/>
            <person name="Yamazaki M."/>
            <person name="Ninomiya K."/>
            <person name="Ishibashi T."/>
            <person name="Yamashita H."/>
            <person name="Murakawa K."/>
            <person name="Fujimori K."/>
            <person name="Tanai H."/>
            <person name="Kimata M."/>
            <person name="Watanabe M."/>
            <person name="Hiraoka S."/>
            <person name="Chiba Y."/>
            <person name="Ishida S."/>
            <person name="Ono Y."/>
            <person name="Takiguchi S."/>
            <person name="Watanabe S."/>
            <person name="Yosida M."/>
            <person name="Hotuta T."/>
            <person name="Kusano J."/>
            <person name="Kanehori K."/>
            <person name="Takahashi-Fujii A."/>
            <person name="Hara H."/>
            <person name="Tanase T.-O."/>
            <person name="Nomura Y."/>
            <person name="Togiya S."/>
            <person name="Komai F."/>
            <person name="Hara R."/>
            <person name="Takeuchi K."/>
            <person name="Arita M."/>
            <person name="Imose N."/>
            <person name="Musashino K."/>
            <person name="Yuuki H."/>
            <person name="Oshima A."/>
            <person name="Sasaki N."/>
            <person name="Aotsuka S."/>
            <person name="Yoshikawa Y."/>
            <person name="Matsunawa H."/>
            <person name="Ichihara T."/>
            <person name="Shiohata N."/>
            <person name="Sano S."/>
            <person name="Moriya S."/>
            <person name="Momiyama H."/>
            <person name="Satoh N."/>
            <person name="Takami S."/>
            <person name="Terashima Y."/>
            <person name="Suzuki O."/>
            <person name="Nakagawa S."/>
            <person name="Senoh A."/>
            <person name="Mizoguchi H."/>
            <person name="Goto Y."/>
            <person name="Shimizu F."/>
            <person name="Wakebe H."/>
            <person name="Hishigaki H."/>
            <person name="Watanabe T."/>
            <person name="Sugiyama A."/>
            <person name="Takemoto M."/>
            <person name="Kawakami B."/>
            <person name="Yamazaki M."/>
            <person name="Watanabe K."/>
            <person name="Kumagai A."/>
            <person name="Itakura S."/>
            <person name="Fukuzumi Y."/>
            <person name="Fujimori Y."/>
            <person name="Komiyama M."/>
            <person name="Tashiro H."/>
            <person name="Tanigami A."/>
            <person name="Fujiwara T."/>
            <person name="Ono T."/>
            <person name="Yamada K."/>
            <person name="Fujii Y."/>
            <person name="Ozaki K."/>
            <person name="Hirao M."/>
            <person name="Ohmori Y."/>
            <person name="Kawabata A."/>
            <person name="Hikiji T."/>
            <person name="Kobatake N."/>
            <person name="Inagaki H."/>
            <person name="Ikema Y."/>
            <person name="Okamoto S."/>
            <person name="Okitani R."/>
            <person name="Kawakami T."/>
            <person name="Noguchi S."/>
            <person name="Itoh T."/>
            <person name="Shigeta K."/>
            <person name="Senba T."/>
            <person name="Matsumura K."/>
            <person name="Nakajima Y."/>
            <person name="Mizuno T."/>
            <person name="Morinaga M."/>
            <person name="Sasaki M."/>
            <person name="Togashi T."/>
            <person name="Oyama M."/>
            <person name="Hata H."/>
            <person name="Watanabe M."/>
            <person name="Komatsu T."/>
            <person name="Mizushima-Sugano J."/>
            <person name="Satoh T."/>
            <person name="Shirai Y."/>
            <person name="Takahashi Y."/>
            <person name="Nakagawa K."/>
            <person name="Okumura K."/>
            <person name="Nagase T."/>
            <person name="Nomura N."/>
            <person name="Kikuchi H."/>
            <person name="Masuho Y."/>
            <person name="Yamashita R."/>
            <person name="Nakai K."/>
            <person name="Yada T."/>
            <person name="Nakamura Y."/>
            <person name="Ohara O."/>
            <person name="Isogai T."/>
            <person name="Sugano S."/>
        </authorList>
    </citation>
    <scope>NUCLEOTIDE SEQUENCE [LARGE SCALE MRNA] OF 586-796</scope>
    <source>
        <tissue>Kidney</tissue>
    </source>
</reference>
<reference key="4">
    <citation type="journal article" date="2009" name="J. Biol. Chem.">
        <title>Speckled-like pattern in the germinal center (SLIP-GC): a nuclear GTPase expressed in activation-induced deaminase-expressing lymphomas and germinal center B cells.</title>
        <authorList>
            <person name="Richter K."/>
            <person name="Brar S.S."/>
            <person name="Ray M."/>
            <person name="Pisitkun P."/>
            <person name="Bolland S."/>
            <person name="Verkoczy L."/>
            <person name="Diaz M."/>
        </authorList>
    </citation>
    <scope>FUNCTION</scope>
    <scope>SUBCELLULAR LOCATION</scope>
    <scope>TISSUE SPECIFICITY</scope>
</reference>
<organism>
    <name type="scientific">Homo sapiens</name>
    <name type="common">Human</name>
    <dbReference type="NCBI Taxonomy" id="9606"/>
    <lineage>
        <taxon>Eukaryota</taxon>
        <taxon>Metazoa</taxon>
        <taxon>Chordata</taxon>
        <taxon>Craniata</taxon>
        <taxon>Vertebrata</taxon>
        <taxon>Euteleostomi</taxon>
        <taxon>Mammalia</taxon>
        <taxon>Eutheria</taxon>
        <taxon>Euarchontoglires</taxon>
        <taxon>Primates</taxon>
        <taxon>Haplorrhini</taxon>
        <taxon>Catarrhini</taxon>
        <taxon>Hominidae</taxon>
        <taxon>Homo</taxon>
    </lineage>
</organism>
<keyword id="KW-0175">Coiled coil</keyword>
<keyword id="KW-0342">GTP-binding</keyword>
<keyword id="KW-0378">Hydrolase</keyword>
<keyword id="KW-0547">Nucleotide-binding</keyword>
<keyword id="KW-0539">Nucleus</keyword>
<keyword id="KW-1267">Proteomics identification</keyword>
<keyword id="KW-1185">Reference proteome</keyword>
<gene>
    <name type="primary">NUGGC</name>
    <name type="synonym">C8orf80</name>
    <name type="ORF">HMFN0672</name>
</gene>
<feature type="chain" id="PRO_0000299479" description="Nuclear GTPase SLIP-GC">
    <location>
        <begin position="1"/>
        <end position="796"/>
    </location>
</feature>
<feature type="region of interest" description="Disordered" evidence="3">
    <location>
        <begin position="1"/>
        <end position="35"/>
    </location>
</feature>
<feature type="coiled-coil region" evidence="2">
    <location>
        <begin position="158"/>
        <end position="185"/>
    </location>
</feature>
<feature type="coiled-coil region" evidence="2">
    <location>
        <begin position="745"/>
        <end position="775"/>
    </location>
</feature>
<feature type="compositionally biased region" description="Basic and acidic residues" evidence="3">
    <location>
        <begin position="1"/>
        <end position="22"/>
    </location>
</feature>
<feature type="binding site" evidence="2">
    <location>
        <begin position="107"/>
        <end position="114"/>
    </location>
    <ligand>
        <name>GTP</name>
        <dbReference type="ChEBI" id="CHEBI:37565"/>
    </ligand>
</feature>
<feature type="sequence variant" id="VAR_034823" description="In dbSNP:rs6998705." evidence="4">
    <original>R</original>
    <variation>P</variation>
    <location>
        <position position="23"/>
    </location>
</feature>
<feature type="sequence variant" id="VAR_034824" description="In dbSNP:rs4732620.">
    <original>S</original>
    <variation>G</variation>
    <location>
        <position position="180"/>
    </location>
</feature>
<feature type="sequence variant" id="VAR_034825" description="In dbSNP:rs7817227." evidence="4">
    <original>Q</original>
    <variation>R</variation>
    <location>
        <position position="328"/>
    </location>
</feature>
<feature type="sequence variant" id="VAR_034826" description="In dbSNP:rs13279787." evidence="4">
    <original>S</original>
    <variation>N</variation>
    <location>
        <position position="474"/>
    </location>
</feature>
<feature type="sequence variant" id="VAR_056814" description="In dbSNP:rs2305453.">
    <original>R</original>
    <variation>W</variation>
    <location>
        <position position="492"/>
    </location>
</feature>
<proteinExistence type="evidence at protein level"/>
<protein>
    <recommendedName>
        <fullName>Nuclear GTPase SLIP-GC</fullName>
        <ecNumber>3.6.1.-</ecNumber>
    </recommendedName>
    <alternativeName>
        <fullName>Speckled-like pattern in the germinal center</fullName>
    </alternativeName>
</protein>
<accession>Q68CJ6</accession>
<accession>Q6ZP73</accession>
<name>SLIP_HUMAN</name>
<sequence length="796" mass="91132">MAETKDVFGQEPHPVEDDLYKERTRKRRKSDRDQRFRAFPSMEQSALKEYEKLESRTRRVLSNTYQKLIQSVFLDDSIPNGVKYLINRLLALIEKPTVDPIYIALFGSTGAGKSSLINAIIQQAMFLPVSGESICTSCIVQVSSGCCVQYEAKIHLLSDQEWREELKNLTKLLHRTEELSREEADAWNRDEAVEEATWKLQMIYGNGAESKNYEELLRAKPKRKIPTSRVITLKAEEAEELSIKLDPYIRTQRRDWDGEAAEMRIWPLIKHVEVTLPKSDLIPEGVVLVDIPGTGDFNSKRDEMWKKTIDKCSVIWVISDIERVSGGQAHEDLLNESIKACQRGFCRDVALVVTKMDKLHLPEYLRERKAGNQAIQSQREAVLERNEMIKLQRTRILKEKLKRKLPADFKVLEASDLVYTVSAQEYWQQALLTEEETEIPKLREYIRKSLLDKKKRTVTKYVTEAFGLLLLTDSFNSTQNLPNEHLHMSVLRRFAEEKVELLEKAIAQCFACMEQPLQEGVRTARTSYRCILRACLVRSKGNQGFHQTLKAVCLKNGIYASRTLARIDLNEALTQPVYDQIDPVFGSIFRTGKPTGSALMPHIDAFKQSLQEKMTEIGIRSGWKYDSCKKNFLIQEISAILGGLEDHILRRKRRIYESLTASVQSDLKLCYEEAAQITGKKACERMKDAIRRGVDRQVAEGMFERAQERMQHQFQQLKTGIVEKVKGSITTMLALASSQGDGLYKELADVGSEYKEMEKLHRSLREVAENARLRKGMQEFLLRASPSKAGPPGTSL</sequence>
<comment type="function">
    <text evidence="1 5">Nuclear GTPase found in germinal center B-cells, where it may inhibit function of the activation-induced cytidine deaminase AICDA (PubMed:19734146). Reduces somatic hypermutation in B-cells which may enhance genome stability (By similarity).</text>
</comment>
<comment type="subcellular location">
    <subcellularLocation>
        <location evidence="5">Nucleus speckle</location>
    </subcellularLocation>
</comment>
<comment type="tissue specificity">
    <text evidence="5">Expressed in germinal center B-cell and in lymphomas derived from germinal center B-cell.</text>
</comment>
<comment type="sequence caution" evidence="6">
    <conflict type="erroneous initiation">
        <sequence resource="EMBL-CDS" id="BAC85251"/>
    </conflict>
    <text>Truncated N-terminus.</text>
</comment>
<comment type="sequence caution" evidence="6">
    <conflict type="miscellaneous discrepancy">
        <sequence resource="EMBL-CDS" id="BAD38652"/>
    </conflict>
    <text>Probable cloning artifact.</text>
</comment>